<feature type="chain" id="PRO_0000115270" description="Uncharacterized protein US5">
    <location>
        <begin position="1"/>
        <end position="127"/>
    </location>
</feature>
<dbReference type="EMBL" id="AH013698">
    <property type="protein sequence ID" value="AAS49003.1"/>
    <property type="molecule type" value="Genomic_DNA"/>
</dbReference>
<gene>
    <name type="primary">US5</name>
</gene>
<accession>Q6RXC1</accession>
<reference key="1">
    <citation type="submission" date="2003-11" db="EMBL/GenBank/DDBJ databases">
        <title>Differences in the nucleotide sequences between the AD169 and Toledo strains of Human cytomegalovirus.</title>
        <authorList>
            <person name="Brondke H."/>
            <person name="Schmitz B."/>
            <person name="Shenk T."/>
            <person name="Doerfler W."/>
        </authorList>
    </citation>
    <scope>NUCLEOTIDE SEQUENCE [GENOMIC DNA]</scope>
</reference>
<name>US05_HCMVO</name>
<proteinExistence type="predicted"/>
<organism>
    <name type="scientific">Human cytomegalovirus (strain Toledo)</name>
    <name type="common">HHV-5</name>
    <name type="synonym">Human herpesvirus 5</name>
    <dbReference type="NCBI Taxonomy" id="311339"/>
    <lineage>
        <taxon>Viruses</taxon>
        <taxon>Duplodnaviria</taxon>
        <taxon>Heunggongvirae</taxon>
        <taxon>Peploviricota</taxon>
        <taxon>Herviviricetes</taxon>
        <taxon>Herpesvirales</taxon>
        <taxon>Orthoherpesviridae</taxon>
        <taxon>Betaherpesvirinae</taxon>
        <taxon>Cytomegalovirus</taxon>
        <taxon>Cytomegalovirus humanbeta5</taxon>
        <taxon>Human cytomegalovirus</taxon>
    </lineage>
</organism>
<protein>
    <recommendedName>
        <fullName>Uncharacterized protein US5</fullName>
    </recommendedName>
</protein>
<organismHost>
    <name type="scientific">Homo sapiens</name>
    <name type="common">Human</name>
    <dbReference type="NCBI Taxonomy" id="9606"/>
</organismHost>
<sequence>MRTQRAGLSAIVATYRYQLATGIVYRDISSTIATEKKIPFVENAVLKERAFIETIKQHQEPQRRIPRPVDSYVMLHSNARITTSRVIPQHRYKVTAKNPCRSIKRNAFQTAPSQTQSFISVNNRWLG</sequence>